<keyword id="KW-0067">ATP-binding</keyword>
<keyword id="KW-0963">Cytoplasm</keyword>
<keyword id="KW-0418">Kinase</keyword>
<keyword id="KW-0460">Magnesium</keyword>
<keyword id="KW-0479">Metal-binding</keyword>
<keyword id="KW-0546">Nucleotide metabolism</keyword>
<keyword id="KW-0547">Nucleotide-binding</keyword>
<keyword id="KW-0597">Phosphoprotein</keyword>
<keyword id="KW-0808">Transferase</keyword>
<proteinExistence type="inferred from homology"/>
<evidence type="ECO:0000255" key="1">
    <source>
        <dbReference type="HAMAP-Rule" id="MF_00451"/>
    </source>
</evidence>
<dbReference type="EC" id="2.7.4.6" evidence="1"/>
<dbReference type="EMBL" id="CP000472">
    <property type="protein sequence ID" value="ACJ28476.1"/>
    <property type="molecule type" value="Genomic_DNA"/>
</dbReference>
<dbReference type="RefSeq" id="WP_020911854.1">
    <property type="nucleotide sequence ID" value="NC_011566.1"/>
</dbReference>
<dbReference type="SMR" id="B8CMX4"/>
<dbReference type="STRING" id="225849.swp_1704"/>
<dbReference type="KEGG" id="swp:swp_1704"/>
<dbReference type="eggNOG" id="COG0105">
    <property type="taxonomic scope" value="Bacteria"/>
</dbReference>
<dbReference type="HOGENOM" id="CLU_060216_8_1_6"/>
<dbReference type="OrthoDB" id="9801161at2"/>
<dbReference type="Proteomes" id="UP000000753">
    <property type="component" value="Chromosome"/>
</dbReference>
<dbReference type="GO" id="GO:0005737">
    <property type="term" value="C:cytoplasm"/>
    <property type="evidence" value="ECO:0007669"/>
    <property type="project" value="UniProtKB-SubCell"/>
</dbReference>
<dbReference type="GO" id="GO:0005524">
    <property type="term" value="F:ATP binding"/>
    <property type="evidence" value="ECO:0007669"/>
    <property type="project" value="UniProtKB-UniRule"/>
</dbReference>
<dbReference type="GO" id="GO:0046872">
    <property type="term" value="F:metal ion binding"/>
    <property type="evidence" value="ECO:0007669"/>
    <property type="project" value="UniProtKB-KW"/>
</dbReference>
<dbReference type="GO" id="GO:0004550">
    <property type="term" value="F:nucleoside diphosphate kinase activity"/>
    <property type="evidence" value="ECO:0007669"/>
    <property type="project" value="UniProtKB-UniRule"/>
</dbReference>
<dbReference type="GO" id="GO:0006241">
    <property type="term" value="P:CTP biosynthetic process"/>
    <property type="evidence" value="ECO:0007669"/>
    <property type="project" value="UniProtKB-UniRule"/>
</dbReference>
<dbReference type="GO" id="GO:0006183">
    <property type="term" value="P:GTP biosynthetic process"/>
    <property type="evidence" value="ECO:0007669"/>
    <property type="project" value="UniProtKB-UniRule"/>
</dbReference>
<dbReference type="GO" id="GO:0006228">
    <property type="term" value="P:UTP biosynthetic process"/>
    <property type="evidence" value="ECO:0007669"/>
    <property type="project" value="UniProtKB-UniRule"/>
</dbReference>
<dbReference type="CDD" id="cd04413">
    <property type="entry name" value="NDPk_I"/>
    <property type="match status" value="1"/>
</dbReference>
<dbReference type="FunFam" id="3.30.70.141:FF:000001">
    <property type="entry name" value="Nucleoside diphosphate kinase"/>
    <property type="match status" value="1"/>
</dbReference>
<dbReference type="Gene3D" id="3.30.70.141">
    <property type="entry name" value="Nucleoside diphosphate kinase-like domain"/>
    <property type="match status" value="1"/>
</dbReference>
<dbReference type="HAMAP" id="MF_00451">
    <property type="entry name" value="NDP_kinase"/>
    <property type="match status" value="1"/>
</dbReference>
<dbReference type="InterPro" id="IPR034907">
    <property type="entry name" value="NDK-like_dom"/>
</dbReference>
<dbReference type="InterPro" id="IPR036850">
    <property type="entry name" value="NDK-like_dom_sf"/>
</dbReference>
<dbReference type="InterPro" id="IPR001564">
    <property type="entry name" value="Nucleoside_diP_kinase"/>
</dbReference>
<dbReference type="InterPro" id="IPR023005">
    <property type="entry name" value="Nucleoside_diP_kinase_AS"/>
</dbReference>
<dbReference type="NCBIfam" id="NF001908">
    <property type="entry name" value="PRK00668.1"/>
    <property type="match status" value="1"/>
</dbReference>
<dbReference type="PANTHER" id="PTHR46161">
    <property type="entry name" value="NUCLEOSIDE DIPHOSPHATE KINASE"/>
    <property type="match status" value="1"/>
</dbReference>
<dbReference type="PANTHER" id="PTHR46161:SF3">
    <property type="entry name" value="NUCLEOSIDE DIPHOSPHATE KINASE DDB_G0292928-RELATED"/>
    <property type="match status" value="1"/>
</dbReference>
<dbReference type="Pfam" id="PF00334">
    <property type="entry name" value="NDK"/>
    <property type="match status" value="1"/>
</dbReference>
<dbReference type="PRINTS" id="PR01243">
    <property type="entry name" value="NUCDPKINASE"/>
</dbReference>
<dbReference type="SMART" id="SM00562">
    <property type="entry name" value="NDK"/>
    <property type="match status" value="1"/>
</dbReference>
<dbReference type="SUPFAM" id="SSF54919">
    <property type="entry name" value="Nucleoside diphosphate kinase, NDK"/>
    <property type="match status" value="1"/>
</dbReference>
<dbReference type="PROSITE" id="PS00469">
    <property type="entry name" value="NDPK"/>
    <property type="match status" value="1"/>
</dbReference>
<dbReference type="PROSITE" id="PS51374">
    <property type="entry name" value="NDPK_LIKE"/>
    <property type="match status" value="1"/>
</dbReference>
<sequence length="143" mass="15562">MAIERTFSIIKPDAVAKNHIGAIYNRFETAGLKIIASKMVHLSQEQAEGFYAEHSERPFFGALVAFMTSGPIMVQTLEGENAVLAHREILGATNPAEAAEGTIRADFAESIDENAAHGSDSVASAEREVAYFFSTEELCPRTR</sequence>
<feature type="chain" id="PRO_1000125017" description="Nucleoside diphosphate kinase">
    <location>
        <begin position="1"/>
        <end position="143"/>
    </location>
</feature>
<feature type="active site" description="Pros-phosphohistidine intermediate" evidence="1">
    <location>
        <position position="117"/>
    </location>
</feature>
<feature type="binding site" evidence="1">
    <location>
        <position position="11"/>
    </location>
    <ligand>
        <name>ATP</name>
        <dbReference type="ChEBI" id="CHEBI:30616"/>
    </ligand>
</feature>
<feature type="binding site" evidence="1">
    <location>
        <position position="59"/>
    </location>
    <ligand>
        <name>ATP</name>
        <dbReference type="ChEBI" id="CHEBI:30616"/>
    </ligand>
</feature>
<feature type="binding site" evidence="1">
    <location>
        <position position="87"/>
    </location>
    <ligand>
        <name>ATP</name>
        <dbReference type="ChEBI" id="CHEBI:30616"/>
    </ligand>
</feature>
<feature type="binding site" evidence="1">
    <location>
        <position position="93"/>
    </location>
    <ligand>
        <name>ATP</name>
        <dbReference type="ChEBI" id="CHEBI:30616"/>
    </ligand>
</feature>
<feature type="binding site" evidence="1">
    <location>
        <position position="104"/>
    </location>
    <ligand>
        <name>ATP</name>
        <dbReference type="ChEBI" id="CHEBI:30616"/>
    </ligand>
</feature>
<feature type="binding site" evidence="1">
    <location>
        <position position="114"/>
    </location>
    <ligand>
        <name>ATP</name>
        <dbReference type="ChEBI" id="CHEBI:30616"/>
    </ligand>
</feature>
<reference key="1">
    <citation type="journal article" date="2008" name="PLoS ONE">
        <title>Environmental adaptation: genomic analysis of the piezotolerant and psychrotolerant deep-sea iron reducing bacterium Shewanella piezotolerans WP3.</title>
        <authorList>
            <person name="Wang F."/>
            <person name="Wang J."/>
            <person name="Jian H."/>
            <person name="Zhang B."/>
            <person name="Li S."/>
            <person name="Wang F."/>
            <person name="Zeng X."/>
            <person name="Gao L."/>
            <person name="Bartlett D.H."/>
            <person name="Yu J."/>
            <person name="Hu S."/>
            <person name="Xiao X."/>
        </authorList>
    </citation>
    <scope>NUCLEOTIDE SEQUENCE [LARGE SCALE GENOMIC DNA]</scope>
    <source>
        <strain>WP3 / JCM 13877</strain>
    </source>
</reference>
<organism>
    <name type="scientific">Shewanella piezotolerans (strain WP3 / JCM 13877)</name>
    <dbReference type="NCBI Taxonomy" id="225849"/>
    <lineage>
        <taxon>Bacteria</taxon>
        <taxon>Pseudomonadati</taxon>
        <taxon>Pseudomonadota</taxon>
        <taxon>Gammaproteobacteria</taxon>
        <taxon>Alteromonadales</taxon>
        <taxon>Shewanellaceae</taxon>
        <taxon>Shewanella</taxon>
    </lineage>
</organism>
<accession>B8CMX4</accession>
<protein>
    <recommendedName>
        <fullName evidence="1">Nucleoside diphosphate kinase</fullName>
        <shortName evidence="1">NDK</shortName>
        <shortName evidence="1">NDP kinase</shortName>
        <ecNumber evidence="1">2.7.4.6</ecNumber>
    </recommendedName>
    <alternativeName>
        <fullName evidence="1">Nucleoside-2-P kinase</fullName>
    </alternativeName>
</protein>
<gene>
    <name evidence="1" type="primary">ndk</name>
    <name type="ordered locus">swp_1704</name>
</gene>
<comment type="function">
    <text evidence="1">Major role in the synthesis of nucleoside triphosphates other than ATP. The ATP gamma phosphate is transferred to the NDP beta phosphate via a ping-pong mechanism, using a phosphorylated active-site intermediate.</text>
</comment>
<comment type="catalytic activity">
    <reaction evidence="1">
        <text>a 2'-deoxyribonucleoside 5'-diphosphate + ATP = a 2'-deoxyribonucleoside 5'-triphosphate + ADP</text>
        <dbReference type="Rhea" id="RHEA:44640"/>
        <dbReference type="ChEBI" id="CHEBI:30616"/>
        <dbReference type="ChEBI" id="CHEBI:61560"/>
        <dbReference type="ChEBI" id="CHEBI:73316"/>
        <dbReference type="ChEBI" id="CHEBI:456216"/>
        <dbReference type="EC" id="2.7.4.6"/>
    </reaction>
</comment>
<comment type="catalytic activity">
    <reaction evidence="1">
        <text>a ribonucleoside 5'-diphosphate + ATP = a ribonucleoside 5'-triphosphate + ADP</text>
        <dbReference type="Rhea" id="RHEA:18113"/>
        <dbReference type="ChEBI" id="CHEBI:30616"/>
        <dbReference type="ChEBI" id="CHEBI:57930"/>
        <dbReference type="ChEBI" id="CHEBI:61557"/>
        <dbReference type="ChEBI" id="CHEBI:456216"/>
        <dbReference type="EC" id="2.7.4.6"/>
    </reaction>
</comment>
<comment type="cofactor">
    <cofactor evidence="1">
        <name>Mg(2+)</name>
        <dbReference type="ChEBI" id="CHEBI:18420"/>
    </cofactor>
</comment>
<comment type="subunit">
    <text evidence="1">Homotetramer.</text>
</comment>
<comment type="subcellular location">
    <subcellularLocation>
        <location evidence="1">Cytoplasm</location>
    </subcellularLocation>
</comment>
<comment type="similarity">
    <text evidence="1">Belongs to the NDK family.</text>
</comment>
<name>NDK_SHEPW</name>